<organism>
    <name type="scientific">Rhizobium meliloti (strain 1021)</name>
    <name type="common">Ensifer meliloti</name>
    <name type="synonym">Sinorhizobium meliloti</name>
    <dbReference type="NCBI Taxonomy" id="266834"/>
    <lineage>
        <taxon>Bacteria</taxon>
        <taxon>Pseudomonadati</taxon>
        <taxon>Pseudomonadota</taxon>
        <taxon>Alphaproteobacteria</taxon>
        <taxon>Hyphomicrobiales</taxon>
        <taxon>Rhizobiaceae</taxon>
        <taxon>Sinorhizobium/Ensifer group</taxon>
        <taxon>Sinorhizobium</taxon>
    </lineage>
</organism>
<dbReference type="EMBL" id="AL591688">
    <property type="protein sequence ID" value="CAC47190.1"/>
    <property type="molecule type" value="Genomic_DNA"/>
</dbReference>
<dbReference type="RefSeq" id="NP_386717.1">
    <property type="nucleotide sequence ID" value="NC_003047.1"/>
</dbReference>
<dbReference type="RefSeq" id="WP_010970074.1">
    <property type="nucleotide sequence ID" value="NC_003047.1"/>
</dbReference>
<dbReference type="SMR" id="Q92MK5"/>
<dbReference type="EnsemblBacteria" id="CAC47190">
    <property type="protein sequence ID" value="CAC47190"/>
    <property type="gene ID" value="SMc02436"/>
</dbReference>
<dbReference type="KEGG" id="sme:SMc02436"/>
<dbReference type="PATRIC" id="fig|266834.11.peg.4109"/>
<dbReference type="eggNOG" id="COG0216">
    <property type="taxonomic scope" value="Bacteria"/>
</dbReference>
<dbReference type="HOGENOM" id="CLU_036856_0_1_5"/>
<dbReference type="OrthoDB" id="9806673at2"/>
<dbReference type="Proteomes" id="UP000001976">
    <property type="component" value="Chromosome"/>
</dbReference>
<dbReference type="GO" id="GO:0005737">
    <property type="term" value="C:cytoplasm"/>
    <property type="evidence" value="ECO:0007669"/>
    <property type="project" value="UniProtKB-SubCell"/>
</dbReference>
<dbReference type="GO" id="GO:0016149">
    <property type="term" value="F:translation release factor activity, codon specific"/>
    <property type="evidence" value="ECO:0007669"/>
    <property type="project" value="UniProtKB-UniRule"/>
</dbReference>
<dbReference type="FunFam" id="3.30.160.20:FF:000004">
    <property type="entry name" value="Peptide chain release factor 1"/>
    <property type="match status" value="1"/>
</dbReference>
<dbReference type="FunFam" id="3.30.70.1660:FF:000002">
    <property type="entry name" value="Peptide chain release factor 1"/>
    <property type="match status" value="1"/>
</dbReference>
<dbReference type="FunFam" id="3.30.70.1660:FF:000004">
    <property type="entry name" value="Peptide chain release factor 1"/>
    <property type="match status" value="1"/>
</dbReference>
<dbReference type="Gene3D" id="3.30.160.20">
    <property type="match status" value="1"/>
</dbReference>
<dbReference type="Gene3D" id="3.30.70.1660">
    <property type="match status" value="2"/>
</dbReference>
<dbReference type="Gene3D" id="6.10.140.1950">
    <property type="match status" value="1"/>
</dbReference>
<dbReference type="HAMAP" id="MF_00093">
    <property type="entry name" value="Rel_fac_1"/>
    <property type="match status" value="1"/>
</dbReference>
<dbReference type="InterPro" id="IPR005139">
    <property type="entry name" value="PCRF"/>
</dbReference>
<dbReference type="InterPro" id="IPR000352">
    <property type="entry name" value="Pep_chain_release_fac_I"/>
</dbReference>
<dbReference type="InterPro" id="IPR045853">
    <property type="entry name" value="Pep_chain_release_fac_I_sf"/>
</dbReference>
<dbReference type="InterPro" id="IPR050057">
    <property type="entry name" value="Prokaryotic/Mito_RF"/>
</dbReference>
<dbReference type="InterPro" id="IPR004373">
    <property type="entry name" value="RF-1"/>
</dbReference>
<dbReference type="NCBIfam" id="TIGR00019">
    <property type="entry name" value="prfA"/>
    <property type="match status" value="1"/>
</dbReference>
<dbReference type="NCBIfam" id="NF001859">
    <property type="entry name" value="PRK00591.1"/>
    <property type="match status" value="1"/>
</dbReference>
<dbReference type="PANTHER" id="PTHR43804">
    <property type="entry name" value="LD18447P"/>
    <property type="match status" value="1"/>
</dbReference>
<dbReference type="PANTHER" id="PTHR43804:SF7">
    <property type="entry name" value="LD18447P"/>
    <property type="match status" value="1"/>
</dbReference>
<dbReference type="Pfam" id="PF03462">
    <property type="entry name" value="PCRF"/>
    <property type="match status" value="1"/>
</dbReference>
<dbReference type="Pfam" id="PF00472">
    <property type="entry name" value="RF-1"/>
    <property type="match status" value="1"/>
</dbReference>
<dbReference type="SMART" id="SM00937">
    <property type="entry name" value="PCRF"/>
    <property type="match status" value="1"/>
</dbReference>
<dbReference type="SUPFAM" id="SSF75620">
    <property type="entry name" value="Release factor"/>
    <property type="match status" value="1"/>
</dbReference>
<dbReference type="PROSITE" id="PS00745">
    <property type="entry name" value="RF_PROK_I"/>
    <property type="match status" value="1"/>
</dbReference>
<feature type="chain" id="PRO_0000177728" description="Peptide chain release factor 1">
    <location>
        <begin position="1"/>
        <end position="360"/>
    </location>
</feature>
<feature type="region of interest" description="Disordered" evidence="2">
    <location>
        <begin position="281"/>
        <end position="311"/>
    </location>
</feature>
<feature type="compositionally biased region" description="Basic and acidic residues" evidence="2">
    <location>
        <begin position="281"/>
        <end position="307"/>
    </location>
</feature>
<feature type="modified residue" description="N5-methylglutamine" evidence="1">
    <location>
        <position position="235"/>
    </location>
</feature>
<keyword id="KW-0963">Cytoplasm</keyword>
<keyword id="KW-0488">Methylation</keyword>
<keyword id="KW-0648">Protein biosynthesis</keyword>
<keyword id="KW-1185">Reference proteome</keyword>
<reference key="1">
    <citation type="journal article" date="2001" name="Proc. Natl. Acad. Sci. U.S.A.">
        <title>Analysis of the chromosome sequence of the legume symbiont Sinorhizobium meliloti strain 1021.</title>
        <authorList>
            <person name="Capela D."/>
            <person name="Barloy-Hubler F."/>
            <person name="Gouzy J."/>
            <person name="Bothe G."/>
            <person name="Ampe F."/>
            <person name="Batut J."/>
            <person name="Boistard P."/>
            <person name="Becker A."/>
            <person name="Boutry M."/>
            <person name="Cadieu E."/>
            <person name="Dreano S."/>
            <person name="Gloux S."/>
            <person name="Godrie T."/>
            <person name="Goffeau A."/>
            <person name="Kahn D."/>
            <person name="Kiss E."/>
            <person name="Lelaure V."/>
            <person name="Masuy D."/>
            <person name="Pohl T."/>
            <person name="Portetelle D."/>
            <person name="Puehler A."/>
            <person name="Purnelle B."/>
            <person name="Ramsperger U."/>
            <person name="Renard C."/>
            <person name="Thebault P."/>
            <person name="Vandenbol M."/>
            <person name="Weidner S."/>
            <person name="Galibert F."/>
        </authorList>
    </citation>
    <scope>NUCLEOTIDE SEQUENCE [LARGE SCALE GENOMIC DNA]</scope>
    <source>
        <strain>1021</strain>
    </source>
</reference>
<reference key="2">
    <citation type="journal article" date="2001" name="Science">
        <title>The composite genome of the legume symbiont Sinorhizobium meliloti.</title>
        <authorList>
            <person name="Galibert F."/>
            <person name="Finan T.M."/>
            <person name="Long S.R."/>
            <person name="Puehler A."/>
            <person name="Abola P."/>
            <person name="Ampe F."/>
            <person name="Barloy-Hubler F."/>
            <person name="Barnett M.J."/>
            <person name="Becker A."/>
            <person name="Boistard P."/>
            <person name="Bothe G."/>
            <person name="Boutry M."/>
            <person name="Bowser L."/>
            <person name="Buhrmester J."/>
            <person name="Cadieu E."/>
            <person name="Capela D."/>
            <person name="Chain P."/>
            <person name="Cowie A."/>
            <person name="Davis R.W."/>
            <person name="Dreano S."/>
            <person name="Federspiel N.A."/>
            <person name="Fisher R.F."/>
            <person name="Gloux S."/>
            <person name="Godrie T."/>
            <person name="Goffeau A."/>
            <person name="Golding B."/>
            <person name="Gouzy J."/>
            <person name="Gurjal M."/>
            <person name="Hernandez-Lucas I."/>
            <person name="Hong A."/>
            <person name="Huizar L."/>
            <person name="Hyman R.W."/>
            <person name="Jones T."/>
            <person name="Kahn D."/>
            <person name="Kahn M.L."/>
            <person name="Kalman S."/>
            <person name="Keating D.H."/>
            <person name="Kiss E."/>
            <person name="Komp C."/>
            <person name="Lelaure V."/>
            <person name="Masuy D."/>
            <person name="Palm C."/>
            <person name="Peck M.C."/>
            <person name="Pohl T.M."/>
            <person name="Portetelle D."/>
            <person name="Purnelle B."/>
            <person name="Ramsperger U."/>
            <person name="Surzycki R."/>
            <person name="Thebault P."/>
            <person name="Vandenbol M."/>
            <person name="Vorhoelter F.J."/>
            <person name="Weidner S."/>
            <person name="Wells D.H."/>
            <person name="Wong K."/>
            <person name="Yeh K.-C."/>
            <person name="Batut J."/>
        </authorList>
    </citation>
    <scope>NUCLEOTIDE SEQUENCE [LARGE SCALE GENOMIC DNA]</scope>
    <source>
        <strain>1021</strain>
    </source>
</reference>
<name>RF1_RHIME</name>
<evidence type="ECO:0000255" key="1">
    <source>
        <dbReference type="HAMAP-Rule" id="MF_00093"/>
    </source>
</evidence>
<evidence type="ECO:0000256" key="2">
    <source>
        <dbReference type="SAM" id="MobiDB-lite"/>
    </source>
</evidence>
<protein>
    <recommendedName>
        <fullName evidence="1">Peptide chain release factor 1</fullName>
        <shortName evidence="1">RF-1</shortName>
    </recommendedName>
</protein>
<gene>
    <name evidence="1" type="primary">prfA</name>
    <name type="ordered locus">R02611</name>
    <name type="ORF">SMc02436</name>
</gene>
<proteinExistence type="inferred from homology"/>
<sequence>MAKLPVEKMRELERRFGEIEARMSAGPSADVYVKLASEYSELQPVVSKIRAYEKATAELADIAAMLADRATDKDMRDLAEMEKPEVEEKIEALEQEIQILLLPKDAADEKSAILEIRAGTGGSEAALFAGDLFRMYERYAASKGWRVEVLSASEGEAGGYKEIIATVSGRGVFSRLKFESGVHRVQRVPETEASGRIHTSAATVAVLPEAEEIDIDVRPEDIRVDTMRSSGAGGQHVNTTDSAVRITHIPTGIVVTSSEKSQHQNRAKAMQVLRSRLYDMERQRADSERSADRRSQVGSGDRSERIRTYNFPQGRLTDHRINLTLYKLDRMMEGEIDDVVDALLADYQASQLALLGERQN</sequence>
<accession>Q92MK5</accession>
<comment type="function">
    <text evidence="1">Peptide chain release factor 1 directs the termination of translation in response to the peptide chain termination codons UAG and UAA.</text>
</comment>
<comment type="subcellular location">
    <subcellularLocation>
        <location evidence="1">Cytoplasm</location>
    </subcellularLocation>
</comment>
<comment type="PTM">
    <text evidence="1">Methylated by PrmC. Methylation increases the termination efficiency of RF1.</text>
</comment>
<comment type="similarity">
    <text evidence="1">Belongs to the prokaryotic/mitochondrial release factor family.</text>
</comment>